<organism>
    <name type="scientific">Shigella boydii serotype 4 (strain Sb227)</name>
    <dbReference type="NCBI Taxonomy" id="300268"/>
    <lineage>
        <taxon>Bacteria</taxon>
        <taxon>Pseudomonadati</taxon>
        <taxon>Pseudomonadota</taxon>
        <taxon>Gammaproteobacteria</taxon>
        <taxon>Enterobacterales</taxon>
        <taxon>Enterobacteriaceae</taxon>
        <taxon>Shigella</taxon>
    </lineage>
</organism>
<feature type="chain" id="PRO_0000234033" description="Putative L-ribulose-5-phosphate 4-epimerase UlaF">
    <location>
        <begin position="1"/>
        <end position="228"/>
    </location>
</feature>
<feature type="active site" description="Proton donor/acceptor" evidence="1">
    <location>
        <position position="118"/>
    </location>
</feature>
<feature type="active site" description="Proton donor/acceptor" evidence="1">
    <location>
        <position position="225"/>
    </location>
</feature>
<feature type="binding site" evidence="1">
    <location>
        <begin position="26"/>
        <end position="27"/>
    </location>
    <ligand>
        <name>substrate</name>
    </ligand>
</feature>
<feature type="binding site" evidence="1">
    <location>
        <begin position="43"/>
        <end position="44"/>
    </location>
    <ligand>
        <name>substrate</name>
    </ligand>
</feature>
<feature type="binding site" evidence="1">
    <location>
        <begin position="72"/>
        <end position="73"/>
    </location>
    <ligand>
        <name>substrate</name>
    </ligand>
</feature>
<feature type="binding site" evidence="1">
    <location>
        <position position="74"/>
    </location>
    <ligand>
        <name>Zn(2+)</name>
        <dbReference type="ChEBI" id="CHEBI:29105"/>
    </ligand>
</feature>
<feature type="binding site" evidence="1">
    <location>
        <position position="93"/>
    </location>
    <ligand>
        <name>Zn(2+)</name>
        <dbReference type="ChEBI" id="CHEBI:29105"/>
    </ligand>
</feature>
<feature type="binding site" evidence="1">
    <location>
        <position position="95"/>
    </location>
    <ligand>
        <name>Zn(2+)</name>
        <dbReference type="ChEBI" id="CHEBI:29105"/>
    </ligand>
</feature>
<feature type="binding site" evidence="1">
    <location>
        <position position="167"/>
    </location>
    <ligand>
        <name>Zn(2+)</name>
        <dbReference type="ChEBI" id="CHEBI:29105"/>
    </ligand>
</feature>
<gene>
    <name evidence="1" type="primary">ulaF</name>
    <name type="ordered locus">SBO_4257</name>
</gene>
<accession>P0C1B9</accession>
<keyword id="KW-0119">Carbohydrate metabolism</keyword>
<keyword id="KW-0413">Isomerase</keyword>
<keyword id="KW-0479">Metal-binding</keyword>
<keyword id="KW-0862">Zinc</keyword>
<protein>
    <recommendedName>
        <fullName evidence="2">Putative L-ribulose-5-phosphate 4-epimerase UlaF</fullName>
        <ecNumber evidence="1">5.1.3.4</ecNumber>
    </recommendedName>
    <alternativeName>
        <fullName evidence="1">L-ascorbate utilization protein F</fullName>
    </alternativeName>
    <alternativeName>
        <fullName evidence="1">Phosphoribulose isomerase</fullName>
    </alternativeName>
</protein>
<comment type="function">
    <text evidence="1">Catalyzes the isomerization of L-ribulose 5-phosphate to D-xylulose 5-phosphate. Is involved in the anaerobic L-ascorbate utilization.</text>
</comment>
<comment type="catalytic activity">
    <reaction evidence="1">
        <text>L-ribulose 5-phosphate = D-xylulose 5-phosphate</text>
        <dbReference type="Rhea" id="RHEA:22368"/>
        <dbReference type="ChEBI" id="CHEBI:57737"/>
        <dbReference type="ChEBI" id="CHEBI:58226"/>
        <dbReference type="EC" id="5.1.3.4"/>
    </reaction>
</comment>
<comment type="cofactor">
    <cofactor evidence="1">
        <name>Zn(2+)</name>
        <dbReference type="ChEBI" id="CHEBI:29105"/>
    </cofactor>
    <text evidence="1">Binds 1 zinc ion per subunit.</text>
</comment>
<comment type="pathway">
    <text evidence="1">Cofactor degradation; L-ascorbate degradation; D-xylulose 5-phosphate from L-ascorbate: step 4/4.</text>
</comment>
<comment type="induction">
    <text evidence="1">Induced by L-ascorbate. Repressed by UlaR.</text>
</comment>
<comment type="similarity">
    <text evidence="1">Belongs to the aldolase class II family. AraD/FucA subfamily.</text>
</comment>
<comment type="caution">
    <text evidence="2">Could be the product of a pseudogene.</text>
</comment>
<comment type="sequence caution" evidence="2">
    <conflict type="erroneous termination">
        <sequence resource="EMBL" id="CP000036"/>
    </conflict>
    <text>Truncated C-terminus.</text>
</comment>
<proteinExistence type="uncertain"/>
<reference key="1">
    <citation type="journal article" date="2005" name="Nucleic Acids Res.">
        <title>Genome dynamics and diversity of Shigella species, the etiologic agents of bacillary dysentery.</title>
        <authorList>
            <person name="Yang F."/>
            <person name="Yang J."/>
            <person name="Zhang X."/>
            <person name="Chen L."/>
            <person name="Jiang Y."/>
            <person name="Yan Y."/>
            <person name="Tang X."/>
            <person name="Wang J."/>
            <person name="Xiong Z."/>
            <person name="Dong J."/>
            <person name="Xue Y."/>
            <person name="Zhu Y."/>
            <person name="Xu X."/>
            <person name="Sun L."/>
            <person name="Chen S."/>
            <person name="Nie H."/>
            <person name="Peng J."/>
            <person name="Xu J."/>
            <person name="Wang Y."/>
            <person name="Yuan Z."/>
            <person name="Wen Y."/>
            <person name="Yao Z."/>
            <person name="Shen Y."/>
            <person name="Qiang B."/>
            <person name="Hou Y."/>
            <person name="Yu J."/>
            <person name="Jin Q."/>
        </authorList>
    </citation>
    <scope>NUCLEOTIDE SEQUENCE [LARGE SCALE GENOMIC DNA]</scope>
    <source>
        <strain>Sb227</strain>
    </source>
</reference>
<name>ULAF_SHIBS</name>
<sequence>MQKLKQQVFEANMDLPRYGLVTFTWGNVSAIDRERGLVVIKPSGVAYETMKADDMVVVDMSGKVVEGKYRPSSDTATHLELYRRYPSLGGIVHTHSTHATAWAQAGLAIPALGTTHADYFFGDIPCTRGLSEEEVQGEYELNTGKVIIETLGDAEPLHTPGIVVYQHGPFAWGKDAHDAVHNAVVMEEVAKMAWIARSINPQLNHIDSFLMNKHFMRKHGPNAYYGQK</sequence>
<evidence type="ECO:0000255" key="1">
    <source>
        <dbReference type="HAMAP-Rule" id="MF_01952"/>
    </source>
</evidence>
<evidence type="ECO:0000305" key="2"/>
<dbReference type="EC" id="5.1.3.4" evidence="1"/>
<dbReference type="EMBL" id="CP000036">
    <property type="status" value="NOT_ANNOTATED_CDS"/>
    <property type="molecule type" value="Genomic_DNA"/>
</dbReference>
<dbReference type="SMR" id="P0C1B9"/>
<dbReference type="UniPathway" id="UPA00263">
    <property type="reaction ID" value="UER00380"/>
</dbReference>
<dbReference type="Proteomes" id="UP000007067">
    <property type="component" value="Chromosome"/>
</dbReference>
<dbReference type="GO" id="GO:0005829">
    <property type="term" value="C:cytosol"/>
    <property type="evidence" value="ECO:0007669"/>
    <property type="project" value="TreeGrafter"/>
</dbReference>
<dbReference type="GO" id="GO:0016832">
    <property type="term" value="F:aldehyde-lyase activity"/>
    <property type="evidence" value="ECO:0007669"/>
    <property type="project" value="TreeGrafter"/>
</dbReference>
<dbReference type="GO" id="GO:0008742">
    <property type="term" value="F:L-ribulose-phosphate 4-epimerase activity"/>
    <property type="evidence" value="ECO:0007669"/>
    <property type="project" value="UniProtKB-UniRule"/>
</dbReference>
<dbReference type="GO" id="GO:0008270">
    <property type="term" value="F:zinc ion binding"/>
    <property type="evidence" value="ECO:0007669"/>
    <property type="project" value="UniProtKB-UniRule"/>
</dbReference>
<dbReference type="GO" id="GO:0019854">
    <property type="term" value="P:L-ascorbic acid catabolic process"/>
    <property type="evidence" value="ECO:0007669"/>
    <property type="project" value="UniProtKB-UniRule"/>
</dbReference>
<dbReference type="GO" id="GO:0019323">
    <property type="term" value="P:pentose catabolic process"/>
    <property type="evidence" value="ECO:0007669"/>
    <property type="project" value="TreeGrafter"/>
</dbReference>
<dbReference type="CDD" id="cd00398">
    <property type="entry name" value="Aldolase_II"/>
    <property type="match status" value="1"/>
</dbReference>
<dbReference type="FunFam" id="3.40.225.10:FF:000001">
    <property type="entry name" value="L-ribulose-5-phosphate 4-epimerase UlaF"/>
    <property type="match status" value="1"/>
</dbReference>
<dbReference type="Gene3D" id="3.40.225.10">
    <property type="entry name" value="Class II aldolase/adducin N-terminal domain"/>
    <property type="match status" value="1"/>
</dbReference>
<dbReference type="HAMAP" id="MF_01952">
    <property type="entry name" value="UlaF"/>
    <property type="match status" value="1"/>
</dbReference>
<dbReference type="InterPro" id="IPR050197">
    <property type="entry name" value="Aldolase_class_II_sugar_metab"/>
</dbReference>
<dbReference type="InterPro" id="IPR001303">
    <property type="entry name" value="Aldolase_II/adducin_N"/>
</dbReference>
<dbReference type="InterPro" id="IPR036409">
    <property type="entry name" value="Aldolase_II/adducin_N_sf"/>
</dbReference>
<dbReference type="InterPro" id="IPR023499">
    <property type="entry name" value="UlaF"/>
</dbReference>
<dbReference type="NCBIfam" id="NF006047">
    <property type="entry name" value="PRK08193.1"/>
    <property type="match status" value="1"/>
</dbReference>
<dbReference type="NCBIfam" id="NF009003">
    <property type="entry name" value="PRK12348.1"/>
    <property type="match status" value="1"/>
</dbReference>
<dbReference type="PANTHER" id="PTHR22789">
    <property type="entry name" value="FUCULOSE PHOSPHATE ALDOLASE"/>
    <property type="match status" value="1"/>
</dbReference>
<dbReference type="PANTHER" id="PTHR22789:SF9">
    <property type="entry name" value="L-RIBULOSE-5-PHOSPHATE 4-EPIMERASE ULAF"/>
    <property type="match status" value="1"/>
</dbReference>
<dbReference type="Pfam" id="PF00596">
    <property type="entry name" value="Aldolase_II"/>
    <property type="match status" value="1"/>
</dbReference>
<dbReference type="SMART" id="SM01007">
    <property type="entry name" value="Aldolase_II"/>
    <property type="match status" value="1"/>
</dbReference>
<dbReference type="SUPFAM" id="SSF53639">
    <property type="entry name" value="AraD/HMP-PK domain-like"/>
    <property type="match status" value="1"/>
</dbReference>